<proteinExistence type="inferred from homology"/>
<reference key="1">
    <citation type="journal article" date="2002" name="Proc. Natl. Acad. Sci. U.S.A.">
        <title>The complete genome of hyperthermophile Methanopyrus kandleri AV19 and monophyly of archaeal methanogens.</title>
        <authorList>
            <person name="Slesarev A.I."/>
            <person name="Mezhevaya K.V."/>
            <person name="Makarova K.S."/>
            <person name="Polushin N.N."/>
            <person name="Shcherbinina O.V."/>
            <person name="Shakhova V.V."/>
            <person name="Belova G.I."/>
            <person name="Aravind L."/>
            <person name="Natale D.A."/>
            <person name="Rogozin I.B."/>
            <person name="Tatusov R.L."/>
            <person name="Wolf Y.I."/>
            <person name="Stetter K.O."/>
            <person name="Malykh A.G."/>
            <person name="Koonin E.V."/>
            <person name="Kozyavkin S.A."/>
        </authorList>
    </citation>
    <scope>NUCLEOTIDE SEQUENCE [LARGE SCALE GENOMIC DNA]</scope>
    <source>
        <strain>AV19 / DSM 6324 / JCM 9639 / NBRC 100938</strain>
    </source>
</reference>
<accession>Q8TYD6</accession>
<dbReference type="EC" id="5.3.1.16" evidence="1"/>
<dbReference type="EMBL" id="AE009439">
    <property type="protein sequence ID" value="AAM01579.1"/>
    <property type="molecule type" value="Genomic_DNA"/>
</dbReference>
<dbReference type="RefSeq" id="WP_011018734.1">
    <property type="nucleotide sequence ID" value="NC_003551.1"/>
</dbReference>
<dbReference type="SMR" id="Q8TYD6"/>
<dbReference type="FunCoup" id="Q8TYD6">
    <property type="interactions" value="114"/>
</dbReference>
<dbReference type="STRING" id="190192.MK0364"/>
<dbReference type="PaxDb" id="190192-MK0364"/>
<dbReference type="EnsemblBacteria" id="AAM01579">
    <property type="protein sequence ID" value="AAM01579"/>
    <property type="gene ID" value="MK0364"/>
</dbReference>
<dbReference type="GeneID" id="1477667"/>
<dbReference type="KEGG" id="mka:MK0364"/>
<dbReference type="PATRIC" id="fig|190192.8.peg.386"/>
<dbReference type="HOGENOM" id="CLU_048577_1_1_2"/>
<dbReference type="InParanoid" id="Q8TYD6"/>
<dbReference type="OrthoDB" id="52866at2157"/>
<dbReference type="UniPathway" id="UPA00031">
    <property type="reaction ID" value="UER00009"/>
</dbReference>
<dbReference type="Proteomes" id="UP000001826">
    <property type="component" value="Chromosome"/>
</dbReference>
<dbReference type="GO" id="GO:0005737">
    <property type="term" value="C:cytoplasm"/>
    <property type="evidence" value="ECO:0007669"/>
    <property type="project" value="UniProtKB-SubCell"/>
</dbReference>
<dbReference type="GO" id="GO:0003949">
    <property type="term" value="F:1-(5-phosphoribosyl)-5-[(5-phosphoribosylamino)methylideneamino]imidazole-4-carboxamide isomerase activity"/>
    <property type="evidence" value="ECO:0007669"/>
    <property type="project" value="UniProtKB-UniRule"/>
</dbReference>
<dbReference type="GO" id="GO:0000105">
    <property type="term" value="P:L-histidine biosynthetic process"/>
    <property type="evidence" value="ECO:0007669"/>
    <property type="project" value="UniProtKB-UniRule"/>
</dbReference>
<dbReference type="GO" id="GO:0000162">
    <property type="term" value="P:L-tryptophan biosynthetic process"/>
    <property type="evidence" value="ECO:0007669"/>
    <property type="project" value="TreeGrafter"/>
</dbReference>
<dbReference type="CDD" id="cd04732">
    <property type="entry name" value="HisA"/>
    <property type="match status" value="1"/>
</dbReference>
<dbReference type="Gene3D" id="3.20.20.70">
    <property type="entry name" value="Aldolase class I"/>
    <property type="match status" value="1"/>
</dbReference>
<dbReference type="HAMAP" id="MF_01014">
    <property type="entry name" value="HisA"/>
    <property type="match status" value="1"/>
</dbReference>
<dbReference type="InterPro" id="IPR013785">
    <property type="entry name" value="Aldolase_TIM"/>
</dbReference>
<dbReference type="InterPro" id="IPR006062">
    <property type="entry name" value="His_biosynth"/>
</dbReference>
<dbReference type="InterPro" id="IPR006063">
    <property type="entry name" value="HisA_bact_arch"/>
</dbReference>
<dbReference type="InterPro" id="IPR044524">
    <property type="entry name" value="Isoase_HisA-like"/>
</dbReference>
<dbReference type="InterPro" id="IPR023016">
    <property type="entry name" value="Isoase_HisA-like_bact"/>
</dbReference>
<dbReference type="InterPro" id="IPR011060">
    <property type="entry name" value="RibuloseP-bd_barrel"/>
</dbReference>
<dbReference type="NCBIfam" id="TIGR00007">
    <property type="entry name" value="1-(5-phosphoribosyl)-5-[(5-phosphoribosylamino)methylideneamino]imidazole-4-carboxamide isomerase"/>
    <property type="match status" value="1"/>
</dbReference>
<dbReference type="PANTHER" id="PTHR43090">
    <property type="entry name" value="1-(5-PHOSPHORIBOSYL)-5-[(5-PHOSPHORIBOSYLAMINO)METHYLIDENEAMINO] IMIDAZOLE-4-CARBOXAMIDE ISOMERASE"/>
    <property type="match status" value="1"/>
</dbReference>
<dbReference type="PANTHER" id="PTHR43090:SF2">
    <property type="entry name" value="1-(5-PHOSPHORIBOSYL)-5-[(5-PHOSPHORIBOSYLAMINO)METHYLIDENEAMINO] IMIDAZOLE-4-CARBOXAMIDE ISOMERASE"/>
    <property type="match status" value="1"/>
</dbReference>
<dbReference type="Pfam" id="PF00977">
    <property type="entry name" value="His_biosynth"/>
    <property type="match status" value="1"/>
</dbReference>
<dbReference type="SUPFAM" id="SSF51366">
    <property type="entry name" value="Ribulose-phoshate binding barrel"/>
    <property type="match status" value="1"/>
</dbReference>
<evidence type="ECO:0000255" key="1">
    <source>
        <dbReference type="HAMAP-Rule" id="MF_01014"/>
    </source>
</evidence>
<name>HIS4_METKA</name>
<keyword id="KW-0028">Amino-acid biosynthesis</keyword>
<keyword id="KW-0963">Cytoplasm</keyword>
<keyword id="KW-0368">Histidine biosynthesis</keyword>
<keyword id="KW-0413">Isomerase</keyword>
<keyword id="KW-1185">Reference proteome</keyword>
<feature type="chain" id="PRO_0000142093" description="1-(5-phosphoribosyl)-5-[(5-phosphoribosylamino)methylideneamino] imidazole-4-carboxamide isomerase">
    <location>
        <begin position="1"/>
        <end position="242"/>
    </location>
</feature>
<feature type="active site" description="Proton acceptor" evidence="1">
    <location>
        <position position="10"/>
    </location>
</feature>
<feature type="active site" description="Proton donor" evidence="1">
    <location>
        <position position="132"/>
    </location>
</feature>
<sequence>MAFVVIPSVDVVEGKCVQLVEGDPERRTFESDDPVETAHQWSEFFPWIHVVDVDAARGEGDNSDIIGRICEEVDAKVQVGGGIRSAERAEELIELGADRLIVGTVAFTDKDDFSKIVDVCHDHGIEVFVALDVNENHEVLVSGWKEDAGVTLEDAIERFNEVADGYLTTAVHVEGKEMGIDEKVVEKSTGATDLPVLYAGGIASIKDVKRAKEAGAYGVVIGTALYHGDIDPVALLDLMEED</sequence>
<organism>
    <name type="scientific">Methanopyrus kandleri (strain AV19 / DSM 6324 / JCM 9639 / NBRC 100938)</name>
    <dbReference type="NCBI Taxonomy" id="190192"/>
    <lineage>
        <taxon>Archaea</taxon>
        <taxon>Methanobacteriati</taxon>
        <taxon>Methanobacteriota</taxon>
        <taxon>Methanomada group</taxon>
        <taxon>Methanopyri</taxon>
        <taxon>Methanopyrales</taxon>
        <taxon>Methanopyraceae</taxon>
        <taxon>Methanopyrus</taxon>
    </lineage>
</organism>
<gene>
    <name evidence="1" type="primary">hisA</name>
    <name type="ordered locus">MK0364</name>
</gene>
<comment type="catalytic activity">
    <reaction evidence="1">
        <text>1-(5-phospho-beta-D-ribosyl)-5-[(5-phospho-beta-D-ribosylamino)methylideneamino]imidazole-4-carboxamide = 5-[(5-phospho-1-deoxy-D-ribulos-1-ylimino)methylamino]-1-(5-phospho-beta-D-ribosyl)imidazole-4-carboxamide</text>
        <dbReference type="Rhea" id="RHEA:15469"/>
        <dbReference type="ChEBI" id="CHEBI:58435"/>
        <dbReference type="ChEBI" id="CHEBI:58525"/>
        <dbReference type="EC" id="5.3.1.16"/>
    </reaction>
</comment>
<comment type="pathway">
    <text evidence="1">Amino-acid biosynthesis; L-histidine biosynthesis; L-histidine from 5-phospho-alpha-D-ribose 1-diphosphate: step 4/9.</text>
</comment>
<comment type="subcellular location">
    <subcellularLocation>
        <location evidence="1">Cytoplasm</location>
    </subcellularLocation>
</comment>
<comment type="similarity">
    <text evidence="1">Belongs to the HisA/HisF family.</text>
</comment>
<protein>
    <recommendedName>
        <fullName evidence="1">1-(5-phosphoribosyl)-5-[(5-phosphoribosylamino)methylideneamino] imidazole-4-carboxamide isomerase</fullName>
        <ecNumber evidence="1">5.3.1.16</ecNumber>
    </recommendedName>
    <alternativeName>
        <fullName evidence="1">Phosphoribosylformimino-5-aminoimidazole carboxamide ribotide isomerase</fullName>
    </alternativeName>
</protein>